<reference key="1">
    <citation type="submission" date="2007-11" db="EMBL/GenBank/DDBJ databases">
        <title>Complete genome sequence of Clostridium phytofermentans ISDg.</title>
        <authorList>
            <person name="Leschine S.B."/>
            <person name="Warnick T.A."/>
            <person name="Blanchard J.L."/>
            <person name="Schnell D.J."/>
            <person name="Petit E.L."/>
            <person name="LaTouf W.G."/>
            <person name="Copeland A."/>
            <person name="Lucas S."/>
            <person name="Lapidus A."/>
            <person name="Barry K."/>
            <person name="Glavina del Rio T."/>
            <person name="Dalin E."/>
            <person name="Tice H."/>
            <person name="Pitluck S."/>
            <person name="Kiss H."/>
            <person name="Brettin T."/>
            <person name="Bruce D."/>
            <person name="Detter J.C."/>
            <person name="Han C."/>
            <person name="Kuske C."/>
            <person name="Schmutz J."/>
            <person name="Larimer F."/>
            <person name="Land M."/>
            <person name="Hauser L."/>
            <person name="Kyrpides N."/>
            <person name="Kim E.A."/>
            <person name="Richardson P."/>
        </authorList>
    </citation>
    <scope>NUCLEOTIDE SEQUENCE [LARGE SCALE GENOMIC DNA]</scope>
    <source>
        <strain>ATCC 700394 / DSM 18823 / ISDg</strain>
    </source>
</reference>
<feature type="chain" id="PRO_1000076759" description="Phosphopantetheine adenylyltransferase">
    <location>
        <begin position="1"/>
        <end position="163"/>
    </location>
</feature>
<feature type="binding site" evidence="1">
    <location>
        <begin position="9"/>
        <end position="10"/>
    </location>
    <ligand>
        <name>ATP</name>
        <dbReference type="ChEBI" id="CHEBI:30616"/>
    </ligand>
</feature>
<feature type="binding site" evidence="1">
    <location>
        <position position="9"/>
    </location>
    <ligand>
        <name>substrate</name>
    </ligand>
</feature>
<feature type="binding site" evidence="1">
    <location>
        <position position="17"/>
    </location>
    <ligand>
        <name>ATP</name>
        <dbReference type="ChEBI" id="CHEBI:30616"/>
    </ligand>
</feature>
<feature type="binding site" evidence="1">
    <location>
        <position position="41"/>
    </location>
    <ligand>
        <name>substrate</name>
    </ligand>
</feature>
<feature type="binding site" evidence="1">
    <location>
        <position position="73"/>
    </location>
    <ligand>
        <name>substrate</name>
    </ligand>
</feature>
<feature type="binding site" evidence="1">
    <location>
        <position position="87"/>
    </location>
    <ligand>
        <name>substrate</name>
    </ligand>
</feature>
<feature type="binding site" evidence="1">
    <location>
        <begin position="88"/>
        <end position="90"/>
    </location>
    <ligand>
        <name>ATP</name>
        <dbReference type="ChEBI" id="CHEBI:30616"/>
    </ligand>
</feature>
<feature type="binding site" evidence="1">
    <location>
        <position position="98"/>
    </location>
    <ligand>
        <name>ATP</name>
        <dbReference type="ChEBI" id="CHEBI:30616"/>
    </ligand>
</feature>
<feature type="binding site" evidence="1">
    <location>
        <begin position="123"/>
        <end position="129"/>
    </location>
    <ligand>
        <name>ATP</name>
        <dbReference type="ChEBI" id="CHEBI:30616"/>
    </ligand>
</feature>
<feature type="site" description="Transition state stabilizer" evidence="1">
    <location>
        <position position="17"/>
    </location>
</feature>
<evidence type="ECO:0000255" key="1">
    <source>
        <dbReference type="HAMAP-Rule" id="MF_00151"/>
    </source>
</evidence>
<gene>
    <name evidence="1" type="primary">coaD</name>
    <name type="ordered locus">Cphy_1322</name>
</gene>
<accession>A9KNU8</accession>
<organism>
    <name type="scientific">Lachnoclostridium phytofermentans (strain ATCC 700394 / DSM 18823 / ISDg)</name>
    <name type="common">Clostridium phytofermentans</name>
    <dbReference type="NCBI Taxonomy" id="357809"/>
    <lineage>
        <taxon>Bacteria</taxon>
        <taxon>Bacillati</taxon>
        <taxon>Bacillota</taxon>
        <taxon>Clostridia</taxon>
        <taxon>Lachnospirales</taxon>
        <taxon>Lachnospiraceae</taxon>
    </lineage>
</organism>
<protein>
    <recommendedName>
        <fullName evidence="1">Phosphopantetheine adenylyltransferase</fullName>
        <ecNumber evidence="1">2.7.7.3</ecNumber>
    </recommendedName>
    <alternativeName>
        <fullName evidence="1">Dephospho-CoA pyrophosphorylase</fullName>
    </alternativeName>
    <alternativeName>
        <fullName evidence="1">Pantetheine-phosphate adenylyltransferase</fullName>
        <shortName evidence="1">PPAT</shortName>
    </alternativeName>
</protein>
<proteinExistence type="inferred from homology"/>
<dbReference type="EC" id="2.7.7.3" evidence="1"/>
<dbReference type="EMBL" id="CP000885">
    <property type="protein sequence ID" value="ABX41699.1"/>
    <property type="molecule type" value="Genomic_DNA"/>
</dbReference>
<dbReference type="RefSeq" id="WP_012199352.1">
    <property type="nucleotide sequence ID" value="NC_010001.1"/>
</dbReference>
<dbReference type="SMR" id="A9KNU8"/>
<dbReference type="STRING" id="357809.Cphy_1322"/>
<dbReference type="KEGG" id="cpy:Cphy_1322"/>
<dbReference type="eggNOG" id="COG0669">
    <property type="taxonomic scope" value="Bacteria"/>
</dbReference>
<dbReference type="HOGENOM" id="CLU_100149_0_1_9"/>
<dbReference type="OrthoDB" id="9806661at2"/>
<dbReference type="UniPathway" id="UPA00241">
    <property type="reaction ID" value="UER00355"/>
</dbReference>
<dbReference type="Proteomes" id="UP000000370">
    <property type="component" value="Chromosome"/>
</dbReference>
<dbReference type="GO" id="GO:0005737">
    <property type="term" value="C:cytoplasm"/>
    <property type="evidence" value="ECO:0007669"/>
    <property type="project" value="UniProtKB-SubCell"/>
</dbReference>
<dbReference type="GO" id="GO:0005524">
    <property type="term" value="F:ATP binding"/>
    <property type="evidence" value="ECO:0007669"/>
    <property type="project" value="UniProtKB-KW"/>
</dbReference>
<dbReference type="GO" id="GO:0004595">
    <property type="term" value="F:pantetheine-phosphate adenylyltransferase activity"/>
    <property type="evidence" value="ECO:0007669"/>
    <property type="project" value="UniProtKB-UniRule"/>
</dbReference>
<dbReference type="GO" id="GO:0015937">
    <property type="term" value="P:coenzyme A biosynthetic process"/>
    <property type="evidence" value="ECO:0007669"/>
    <property type="project" value="UniProtKB-UniRule"/>
</dbReference>
<dbReference type="CDD" id="cd02163">
    <property type="entry name" value="PPAT"/>
    <property type="match status" value="1"/>
</dbReference>
<dbReference type="Gene3D" id="3.40.50.620">
    <property type="entry name" value="HUPs"/>
    <property type="match status" value="1"/>
</dbReference>
<dbReference type="HAMAP" id="MF_00151">
    <property type="entry name" value="PPAT_bact"/>
    <property type="match status" value="1"/>
</dbReference>
<dbReference type="InterPro" id="IPR004821">
    <property type="entry name" value="Cyt_trans-like"/>
</dbReference>
<dbReference type="InterPro" id="IPR001980">
    <property type="entry name" value="PPAT"/>
</dbReference>
<dbReference type="InterPro" id="IPR014729">
    <property type="entry name" value="Rossmann-like_a/b/a_fold"/>
</dbReference>
<dbReference type="NCBIfam" id="TIGR01510">
    <property type="entry name" value="coaD_prev_kdtB"/>
    <property type="match status" value="1"/>
</dbReference>
<dbReference type="NCBIfam" id="TIGR00125">
    <property type="entry name" value="cyt_tran_rel"/>
    <property type="match status" value="1"/>
</dbReference>
<dbReference type="PANTHER" id="PTHR21342">
    <property type="entry name" value="PHOSPHOPANTETHEINE ADENYLYLTRANSFERASE"/>
    <property type="match status" value="1"/>
</dbReference>
<dbReference type="PANTHER" id="PTHR21342:SF1">
    <property type="entry name" value="PHOSPHOPANTETHEINE ADENYLYLTRANSFERASE"/>
    <property type="match status" value="1"/>
</dbReference>
<dbReference type="Pfam" id="PF01467">
    <property type="entry name" value="CTP_transf_like"/>
    <property type="match status" value="1"/>
</dbReference>
<dbReference type="PRINTS" id="PR01020">
    <property type="entry name" value="LPSBIOSNTHSS"/>
</dbReference>
<dbReference type="SUPFAM" id="SSF52374">
    <property type="entry name" value="Nucleotidylyl transferase"/>
    <property type="match status" value="1"/>
</dbReference>
<comment type="function">
    <text evidence="1">Reversibly transfers an adenylyl group from ATP to 4'-phosphopantetheine, yielding dephospho-CoA (dPCoA) and pyrophosphate.</text>
</comment>
<comment type="catalytic activity">
    <reaction evidence="1">
        <text>(R)-4'-phosphopantetheine + ATP + H(+) = 3'-dephospho-CoA + diphosphate</text>
        <dbReference type="Rhea" id="RHEA:19801"/>
        <dbReference type="ChEBI" id="CHEBI:15378"/>
        <dbReference type="ChEBI" id="CHEBI:30616"/>
        <dbReference type="ChEBI" id="CHEBI:33019"/>
        <dbReference type="ChEBI" id="CHEBI:57328"/>
        <dbReference type="ChEBI" id="CHEBI:61723"/>
        <dbReference type="EC" id="2.7.7.3"/>
    </reaction>
</comment>
<comment type="cofactor">
    <cofactor evidence="1">
        <name>Mg(2+)</name>
        <dbReference type="ChEBI" id="CHEBI:18420"/>
    </cofactor>
</comment>
<comment type="pathway">
    <text evidence="1">Cofactor biosynthesis; coenzyme A biosynthesis; CoA from (R)-pantothenate: step 4/5.</text>
</comment>
<comment type="subunit">
    <text evidence="1">Homohexamer.</text>
</comment>
<comment type="subcellular location">
    <subcellularLocation>
        <location evidence="1">Cytoplasm</location>
    </subcellularLocation>
</comment>
<comment type="similarity">
    <text evidence="1">Belongs to the bacterial CoaD family.</text>
</comment>
<keyword id="KW-0067">ATP-binding</keyword>
<keyword id="KW-0173">Coenzyme A biosynthesis</keyword>
<keyword id="KW-0963">Cytoplasm</keyword>
<keyword id="KW-0460">Magnesium</keyword>
<keyword id="KW-0547">Nucleotide-binding</keyword>
<keyword id="KW-0548">Nucleotidyltransferase</keyword>
<keyword id="KW-1185">Reference proteome</keyword>
<keyword id="KW-0808">Transferase</keyword>
<name>COAD_LACP7</name>
<sequence length="163" mass="18244">MKIGIYPGSFDPVTLGHLDVIRRSAKIMDELVIGVLANSSKTPLFTVEERVKLLECVVKDIPNVKVVAFDGLTVDFAKKLGAKFLIRGLRAITDFEYELQIAQTNHKLDEEIDTVFFTTSVEYSYLSSSIVKEIASYGGDISKFVPNSIIQVIYDKYNGKRSE</sequence>